<organism>
    <name type="scientific">Campylobacter jejuni (strain RM1221)</name>
    <dbReference type="NCBI Taxonomy" id="195099"/>
    <lineage>
        <taxon>Bacteria</taxon>
        <taxon>Pseudomonadati</taxon>
        <taxon>Campylobacterota</taxon>
        <taxon>Epsilonproteobacteria</taxon>
        <taxon>Campylobacterales</taxon>
        <taxon>Campylobacteraceae</taxon>
        <taxon>Campylobacter</taxon>
    </lineage>
</organism>
<accession>Q5HVL5</accession>
<comment type="function">
    <text evidence="1">Involved in peptide bond synthesis. Stimulates efficient translation and peptide-bond synthesis on native or reconstituted 70S ribosomes in vitro. Probably functions indirectly by altering the affinity of the ribosome for aminoacyl-tRNA, thus increasing their reactivity as acceptors for peptidyl transferase.</text>
</comment>
<comment type="pathway">
    <text evidence="1">Protein biosynthesis; polypeptide chain elongation.</text>
</comment>
<comment type="subcellular location">
    <subcellularLocation>
        <location evidence="1">Cytoplasm</location>
    </subcellularLocation>
</comment>
<comment type="similarity">
    <text evidence="1">Belongs to the elongation factor P family.</text>
</comment>
<dbReference type="EMBL" id="CP000025">
    <property type="protein sequence ID" value="AAW35832.1"/>
    <property type="molecule type" value="Genomic_DNA"/>
</dbReference>
<dbReference type="RefSeq" id="WP_002855210.1">
    <property type="nucleotide sequence ID" value="NC_003912.7"/>
</dbReference>
<dbReference type="SMR" id="Q5HVL5"/>
<dbReference type="KEGG" id="cjr:CJE0655"/>
<dbReference type="HOGENOM" id="CLU_074944_0_1_7"/>
<dbReference type="UniPathway" id="UPA00345"/>
<dbReference type="GO" id="GO:0005737">
    <property type="term" value="C:cytoplasm"/>
    <property type="evidence" value="ECO:0007669"/>
    <property type="project" value="UniProtKB-SubCell"/>
</dbReference>
<dbReference type="GO" id="GO:0003746">
    <property type="term" value="F:translation elongation factor activity"/>
    <property type="evidence" value="ECO:0007669"/>
    <property type="project" value="UniProtKB-UniRule"/>
</dbReference>
<dbReference type="GO" id="GO:0043043">
    <property type="term" value="P:peptide biosynthetic process"/>
    <property type="evidence" value="ECO:0007669"/>
    <property type="project" value="InterPro"/>
</dbReference>
<dbReference type="CDD" id="cd04470">
    <property type="entry name" value="S1_EF-P_repeat_1"/>
    <property type="match status" value="1"/>
</dbReference>
<dbReference type="CDD" id="cd05794">
    <property type="entry name" value="S1_EF-P_repeat_2"/>
    <property type="match status" value="1"/>
</dbReference>
<dbReference type="FunFam" id="2.30.30.30:FF:000003">
    <property type="entry name" value="Elongation factor P"/>
    <property type="match status" value="1"/>
</dbReference>
<dbReference type="FunFam" id="2.40.50.140:FF:000004">
    <property type="entry name" value="Elongation factor P"/>
    <property type="match status" value="1"/>
</dbReference>
<dbReference type="FunFam" id="2.40.50.140:FF:000009">
    <property type="entry name" value="Elongation factor P"/>
    <property type="match status" value="1"/>
</dbReference>
<dbReference type="Gene3D" id="2.30.30.30">
    <property type="match status" value="1"/>
</dbReference>
<dbReference type="Gene3D" id="2.40.50.140">
    <property type="entry name" value="Nucleic acid-binding proteins"/>
    <property type="match status" value="2"/>
</dbReference>
<dbReference type="HAMAP" id="MF_00141">
    <property type="entry name" value="EF_P"/>
    <property type="match status" value="1"/>
</dbReference>
<dbReference type="InterPro" id="IPR015365">
    <property type="entry name" value="Elong-fact-P_C"/>
</dbReference>
<dbReference type="InterPro" id="IPR012340">
    <property type="entry name" value="NA-bd_OB-fold"/>
</dbReference>
<dbReference type="InterPro" id="IPR014722">
    <property type="entry name" value="Rib_uL2_dom2"/>
</dbReference>
<dbReference type="InterPro" id="IPR020599">
    <property type="entry name" value="Transl_elong_fac_P/YeiP"/>
</dbReference>
<dbReference type="InterPro" id="IPR013185">
    <property type="entry name" value="Transl_elong_KOW-like"/>
</dbReference>
<dbReference type="InterPro" id="IPR001059">
    <property type="entry name" value="Transl_elong_P/YeiP_cen"/>
</dbReference>
<dbReference type="InterPro" id="IPR011768">
    <property type="entry name" value="Transl_elongation_fac_P"/>
</dbReference>
<dbReference type="InterPro" id="IPR008991">
    <property type="entry name" value="Translation_prot_SH3-like_sf"/>
</dbReference>
<dbReference type="NCBIfam" id="TIGR00038">
    <property type="entry name" value="efp"/>
    <property type="match status" value="1"/>
</dbReference>
<dbReference type="NCBIfam" id="NF001810">
    <property type="entry name" value="PRK00529.1"/>
    <property type="match status" value="1"/>
</dbReference>
<dbReference type="PANTHER" id="PTHR30053">
    <property type="entry name" value="ELONGATION FACTOR P"/>
    <property type="match status" value="1"/>
</dbReference>
<dbReference type="PANTHER" id="PTHR30053:SF12">
    <property type="entry name" value="ELONGATION FACTOR P (EF-P) FAMILY PROTEIN"/>
    <property type="match status" value="1"/>
</dbReference>
<dbReference type="Pfam" id="PF01132">
    <property type="entry name" value="EFP"/>
    <property type="match status" value="1"/>
</dbReference>
<dbReference type="Pfam" id="PF08207">
    <property type="entry name" value="EFP_N"/>
    <property type="match status" value="1"/>
</dbReference>
<dbReference type="Pfam" id="PF09285">
    <property type="entry name" value="Elong-fact-P_C"/>
    <property type="match status" value="1"/>
</dbReference>
<dbReference type="PIRSF" id="PIRSF005901">
    <property type="entry name" value="EF-P"/>
    <property type="match status" value="1"/>
</dbReference>
<dbReference type="SMART" id="SM01185">
    <property type="entry name" value="EFP"/>
    <property type="match status" value="1"/>
</dbReference>
<dbReference type="SMART" id="SM00841">
    <property type="entry name" value="Elong-fact-P_C"/>
    <property type="match status" value="1"/>
</dbReference>
<dbReference type="SUPFAM" id="SSF50249">
    <property type="entry name" value="Nucleic acid-binding proteins"/>
    <property type="match status" value="2"/>
</dbReference>
<dbReference type="SUPFAM" id="SSF50104">
    <property type="entry name" value="Translation proteins SH3-like domain"/>
    <property type="match status" value="1"/>
</dbReference>
<gene>
    <name evidence="1" type="primary">efp</name>
    <name type="ordered locus">CJE0655</name>
</gene>
<proteinExistence type="inferred from homology"/>
<sequence>MASYSMGDLKKGLKIEIDGIPFKIVEYQHVKPGKGPAFVRIKIKSFIDGKVLEKTFHAGDKCEAPNLEDKTMQYLYDDGENCQFMDTQTYEQVAISDDDVGEAKKWMLDGMMVDVLFHNGKAIGVEVPQVVELKIIETAPNFKGDTQGSNKKPATLETGAVVQIPFHVLEGEVIRVDTVRGEYIERANK</sequence>
<protein>
    <recommendedName>
        <fullName evidence="1">Elongation factor P</fullName>
        <shortName evidence="1">EF-P</shortName>
    </recommendedName>
</protein>
<keyword id="KW-0963">Cytoplasm</keyword>
<keyword id="KW-0251">Elongation factor</keyword>
<keyword id="KW-0648">Protein biosynthesis</keyword>
<feature type="chain" id="PRO_0000094222" description="Elongation factor P">
    <location>
        <begin position="1"/>
        <end position="189"/>
    </location>
</feature>
<name>EFP_CAMJR</name>
<reference key="1">
    <citation type="journal article" date="2005" name="PLoS Biol.">
        <title>Major structural differences and novel potential virulence mechanisms from the genomes of multiple Campylobacter species.</title>
        <authorList>
            <person name="Fouts D.E."/>
            <person name="Mongodin E.F."/>
            <person name="Mandrell R.E."/>
            <person name="Miller W.G."/>
            <person name="Rasko D.A."/>
            <person name="Ravel J."/>
            <person name="Brinkac L.M."/>
            <person name="DeBoy R.T."/>
            <person name="Parker C.T."/>
            <person name="Daugherty S.C."/>
            <person name="Dodson R.J."/>
            <person name="Durkin A.S."/>
            <person name="Madupu R."/>
            <person name="Sullivan S.A."/>
            <person name="Shetty J.U."/>
            <person name="Ayodeji M.A."/>
            <person name="Shvartsbeyn A."/>
            <person name="Schatz M.C."/>
            <person name="Badger J.H."/>
            <person name="Fraser C.M."/>
            <person name="Nelson K.E."/>
        </authorList>
    </citation>
    <scope>NUCLEOTIDE SEQUENCE [LARGE SCALE GENOMIC DNA]</scope>
    <source>
        <strain>RM1221</strain>
    </source>
</reference>
<evidence type="ECO:0000255" key="1">
    <source>
        <dbReference type="HAMAP-Rule" id="MF_00141"/>
    </source>
</evidence>